<keyword id="KW-1003">Cell membrane</keyword>
<keyword id="KW-0342">GTP-binding</keyword>
<keyword id="KW-0449">Lipoprotein</keyword>
<keyword id="KW-0472">Membrane</keyword>
<keyword id="KW-0547">Nucleotide-binding</keyword>
<keyword id="KW-0636">Prenylation</keyword>
<keyword id="KW-0653">Protein transport</keyword>
<keyword id="KW-1185">Reference proteome</keyword>
<keyword id="KW-0813">Transport</keyword>
<protein>
    <recommendedName>
        <fullName>GTP-binding protein YPTM1</fullName>
    </recommendedName>
</protein>
<sequence length="208" mass="23311">MSNEFDYLFKLLLIGDSSVGKSCFLLRFADDSYVDSYISTIGVDFKIRTVEVEGKTVKLQIWDTAGQERFRTITSSYYRGAHGIIIVYDITDMESFNNVKQWLDEIDRYANDSVRKLLVGNKCDLAENRAVDTSVAQAYAQEVGIPFLETSAKESINVEEAFLAMSAAIKKSKAGSQAALERKPSNVVQMKGRPIQQEQQKSSRCCST</sequence>
<gene>
    <name type="primary">YPTM1</name>
</gene>
<comment type="function">
    <text evidence="1">Protein transport. Probably involved in vesicular traffic (By similarity).</text>
</comment>
<comment type="subcellular location">
    <subcellularLocation>
        <location evidence="5">Cell membrane</location>
        <topology evidence="5">Lipid-anchor</topology>
        <orientation evidence="5">Cytoplasmic side</orientation>
    </subcellularLocation>
</comment>
<comment type="tissue specificity">
    <text>Low levels in coleoptiles.</text>
</comment>
<comment type="similarity">
    <text evidence="5">Belongs to the small GTPase superfamily. Rab family.</text>
</comment>
<comment type="caution">
    <text evidence="5">This sequence does not have the Cys-Cys motif at the C-terminal as do homologous sequences from yeast species. It may be either geranylgeranylated at an alternative motif or it may be subject to farnesylation on Cys-205.</text>
</comment>
<feature type="chain" id="PRO_0000121297" description="GTP-binding protein YPTM1">
    <location>
        <begin position="1"/>
        <end position="208"/>
    </location>
</feature>
<feature type="region of interest" description="Disordered" evidence="4">
    <location>
        <begin position="189"/>
        <end position="208"/>
    </location>
</feature>
<feature type="short sequence motif" description="Effector region" evidence="5">
    <location>
        <begin position="37"/>
        <end position="45"/>
    </location>
</feature>
<feature type="compositionally biased region" description="Polar residues" evidence="4">
    <location>
        <begin position="196"/>
        <end position="208"/>
    </location>
</feature>
<feature type="binding site" evidence="3">
    <location>
        <begin position="15"/>
        <end position="23"/>
    </location>
    <ligand>
        <name>GTP</name>
        <dbReference type="ChEBI" id="CHEBI:37565"/>
    </ligand>
</feature>
<feature type="binding site" evidence="3">
    <location>
        <begin position="33"/>
        <end position="40"/>
    </location>
    <ligand>
        <name>GTP</name>
        <dbReference type="ChEBI" id="CHEBI:37565"/>
    </ligand>
</feature>
<feature type="binding site" evidence="3">
    <location>
        <begin position="63"/>
        <end position="67"/>
    </location>
    <ligand>
        <name>GTP</name>
        <dbReference type="ChEBI" id="CHEBI:37565"/>
    </ligand>
</feature>
<feature type="binding site" evidence="3">
    <location>
        <begin position="121"/>
        <end position="124"/>
    </location>
    <ligand>
        <name>GTP</name>
        <dbReference type="ChEBI" id="CHEBI:37565"/>
    </ligand>
</feature>
<feature type="binding site" evidence="3">
    <location>
        <begin position="151"/>
        <end position="153"/>
    </location>
    <ligand>
        <name>GTP</name>
        <dbReference type="ChEBI" id="CHEBI:37565"/>
    </ligand>
</feature>
<feature type="lipid moiety-binding region" description="S-geranylgeranyl cysteine" evidence="2">
    <location>
        <position position="205"/>
    </location>
</feature>
<feature type="lipid moiety-binding region" description="S-geranylgeranyl cysteine" evidence="2">
    <location>
        <position position="206"/>
    </location>
</feature>
<feature type="sequence conflict" description="In Ref. 2." evidence="5" ref="2">
    <original>KL</original>
    <variation>NV</variation>
    <location>
        <begin position="116"/>
        <end position="117"/>
    </location>
</feature>
<evidence type="ECO:0000250" key="1"/>
<evidence type="ECO:0000250" key="2">
    <source>
        <dbReference type="UniProtKB" id="P01123"/>
    </source>
</evidence>
<evidence type="ECO:0000250" key="3">
    <source>
        <dbReference type="UniProtKB" id="P62820"/>
    </source>
</evidence>
<evidence type="ECO:0000256" key="4">
    <source>
        <dbReference type="SAM" id="MobiDB-lite"/>
    </source>
</evidence>
<evidence type="ECO:0000305" key="5"/>
<accession>P16976</accession>
<proteinExistence type="evidence at transcript level"/>
<organism>
    <name type="scientific">Zea mays</name>
    <name type="common">Maize</name>
    <dbReference type="NCBI Taxonomy" id="4577"/>
    <lineage>
        <taxon>Eukaryota</taxon>
        <taxon>Viridiplantae</taxon>
        <taxon>Streptophyta</taxon>
        <taxon>Embryophyta</taxon>
        <taxon>Tracheophyta</taxon>
        <taxon>Spermatophyta</taxon>
        <taxon>Magnoliopsida</taxon>
        <taxon>Liliopsida</taxon>
        <taxon>Poales</taxon>
        <taxon>Poaceae</taxon>
        <taxon>PACMAD clade</taxon>
        <taxon>Panicoideae</taxon>
        <taxon>Andropogonodae</taxon>
        <taxon>Andropogoneae</taxon>
        <taxon>Tripsacinae</taxon>
        <taxon>Zea</taxon>
    </lineage>
</organism>
<reference key="1">
    <citation type="journal article" date="1992" name="Proc. Natl. Acad. Sci. U.S.A.">
        <title>Molecular cloning and structural analysis of genes from Zea mays (L.) coding for members of the ras-related ypt gene family.</title>
        <authorList>
            <person name="Palme K."/>
            <person name="Diefenthal T."/>
            <person name="Vingron M."/>
            <person name="Sander C."/>
            <person name="Schell J."/>
        </authorList>
    </citation>
    <scope>NUCLEOTIDE SEQUENCE [MRNA]</scope>
    <source>
        <tissue>Coleoptile</tissue>
    </source>
</reference>
<reference key="2">
    <citation type="book" date="1989" name="The guanine-nucleotide binding proteins: common structural and functional properties">
        <title>Identification of guanine-nucleotide binding proteins in plants: structural analysis and evolutionary comparisons of the ras-related ypt-gene family from Zea mays.</title>
        <editorList>
            <person name="Bosch L."/>
            <person name="Kraal B."/>
            <person name="Parmeggiani A."/>
        </editorList>
        <authorList>
            <person name="Palme K."/>
            <person name="Diefenthal T."/>
            <person name="Sander C."/>
            <person name="Vingron M."/>
            <person name="Schell J."/>
        </authorList>
    </citation>
    <scope>NUCLEOTIDE SEQUENCE [MRNA]</scope>
</reference>
<dbReference type="EMBL" id="X63277">
    <property type="protein sequence ID" value="CAA44918.1"/>
    <property type="molecule type" value="mRNA"/>
</dbReference>
<dbReference type="PIR" id="A38202">
    <property type="entry name" value="A38202"/>
</dbReference>
<dbReference type="RefSeq" id="NP_001105546.1">
    <property type="nucleotide sequence ID" value="NM_001112076.1"/>
</dbReference>
<dbReference type="SMR" id="P16976"/>
<dbReference type="STRING" id="4577.P16976"/>
<dbReference type="PaxDb" id="4577-GRMZM2G108258_P02"/>
<dbReference type="GeneID" id="542531"/>
<dbReference type="KEGG" id="zma:542531"/>
<dbReference type="MaizeGDB" id="65854"/>
<dbReference type="eggNOG" id="KOG0084">
    <property type="taxonomic scope" value="Eukaryota"/>
</dbReference>
<dbReference type="InParanoid" id="P16976"/>
<dbReference type="OrthoDB" id="9989112at2759"/>
<dbReference type="Proteomes" id="UP000007305">
    <property type="component" value="Unplaced"/>
</dbReference>
<dbReference type="ExpressionAtlas" id="P16976">
    <property type="expression patterns" value="baseline and differential"/>
</dbReference>
<dbReference type="GO" id="GO:0012505">
    <property type="term" value="C:endomembrane system"/>
    <property type="evidence" value="ECO:0000318"/>
    <property type="project" value="GO_Central"/>
</dbReference>
<dbReference type="GO" id="GO:0005886">
    <property type="term" value="C:plasma membrane"/>
    <property type="evidence" value="ECO:0007669"/>
    <property type="project" value="UniProtKB-SubCell"/>
</dbReference>
<dbReference type="GO" id="GO:0005525">
    <property type="term" value="F:GTP binding"/>
    <property type="evidence" value="ECO:0007669"/>
    <property type="project" value="UniProtKB-KW"/>
</dbReference>
<dbReference type="GO" id="GO:0003924">
    <property type="term" value="F:GTPase activity"/>
    <property type="evidence" value="ECO:0000318"/>
    <property type="project" value="GO_Central"/>
</dbReference>
<dbReference type="GO" id="GO:0006886">
    <property type="term" value="P:intracellular protein transport"/>
    <property type="evidence" value="ECO:0000318"/>
    <property type="project" value="GO_Central"/>
</dbReference>
<dbReference type="CDD" id="cd01869">
    <property type="entry name" value="Rab1_Ypt1"/>
    <property type="match status" value="1"/>
</dbReference>
<dbReference type="FunFam" id="3.40.50.300:FF:002885">
    <property type="entry name" value="GTP-binding protein YPTM1"/>
    <property type="match status" value="1"/>
</dbReference>
<dbReference type="Gene3D" id="3.40.50.300">
    <property type="entry name" value="P-loop containing nucleotide triphosphate hydrolases"/>
    <property type="match status" value="1"/>
</dbReference>
<dbReference type="InterPro" id="IPR027417">
    <property type="entry name" value="P-loop_NTPase"/>
</dbReference>
<dbReference type="InterPro" id="IPR050227">
    <property type="entry name" value="Rab"/>
</dbReference>
<dbReference type="InterPro" id="IPR005225">
    <property type="entry name" value="Small_GTP-bd"/>
</dbReference>
<dbReference type="InterPro" id="IPR001806">
    <property type="entry name" value="Small_GTPase"/>
</dbReference>
<dbReference type="NCBIfam" id="TIGR00231">
    <property type="entry name" value="small_GTP"/>
    <property type="match status" value="1"/>
</dbReference>
<dbReference type="PANTHER" id="PTHR47977">
    <property type="entry name" value="RAS-RELATED PROTEIN RAB"/>
    <property type="match status" value="1"/>
</dbReference>
<dbReference type="Pfam" id="PF00071">
    <property type="entry name" value="Ras"/>
    <property type="match status" value="1"/>
</dbReference>
<dbReference type="PRINTS" id="PR00449">
    <property type="entry name" value="RASTRNSFRMNG"/>
</dbReference>
<dbReference type="SMART" id="SM00177">
    <property type="entry name" value="ARF"/>
    <property type="match status" value="1"/>
</dbReference>
<dbReference type="SMART" id="SM00175">
    <property type="entry name" value="RAB"/>
    <property type="match status" value="1"/>
</dbReference>
<dbReference type="SMART" id="SM00176">
    <property type="entry name" value="RAN"/>
    <property type="match status" value="1"/>
</dbReference>
<dbReference type="SMART" id="SM00173">
    <property type="entry name" value="RAS"/>
    <property type="match status" value="1"/>
</dbReference>
<dbReference type="SMART" id="SM00174">
    <property type="entry name" value="RHO"/>
    <property type="match status" value="1"/>
</dbReference>
<dbReference type="SUPFAM" id="SSF52540">
    <property type="entry name" value="P-loop containing nucleoside triphosphate hydrolases"/>
    <property type="match status" value="1"/>
</dbReference>
<dbReference type="PROSITE" id="PS51419">
    <property type="entry name" value="RAB"/>
    <property type="match status" value="1"/>
</dbReference>
<name>YPTM1_MAIZE</name>